<dbReference type="EMBL" id="AP008231">
    <property type="protein sequence ID" value="BAD79953.1"/>
    <property type="molecule type" value="Genomic_DNA"/>
</dbReference>
<dbReference type="RefSeq" id="WP_011244073.1">
    <property type="nucleotide sequence ID" value="NZ_CP085785.1"/>
</dbReference>
<dbReference type="SMR" id="Q5N167"/>
<dbReference type="GeneID" id="72431227"/>
<dbReference type="KEGG" id="syc:syc1763_c"/>
<dbReference type="eggNOG" id="COG1160">
    <property type="taxonomic scope" value="Bacteria"/>
</dbReference>
<dbReference type="Proteomes" id="UP000001175">
    <property type="component" value="Chromosome"/>
</dbReference>
<dbReference type="GO" id="GO:0016887">
    <property type="term" value="F:ATP hydrolysis activity"/>
    <property type="evidence" value="ECO:0007669"/>
    <property type="project" value="InterPro"/>
</dbReference>
<dbReference type="GO" id="GO:0005525">
    <property type="term" value="F:GTP binding"/>
    <property type="evidence" value="ECO:0007669"/>
    <property type="project" value="UniProtKB-UniRule"/>
</dbReference>
<dbReference type="GO" id="GO:0043022">
    <property type="term" value="F:ribosome binding"/>
    <property type="evidence" value="ECO:0007669"/>
    <property type="project" value="TreeGrafter"/>
</dbReference>
<dbReference type="GO" id="GO:0042254">
    <property type="term" value="P:ribosome biogenesis"/>
    <property type="evidence" value="ECO:0007669"/>
    <property type="project" value="UniProtKB-KW"/>
</dbReference>
<dbReference type="CDD" id="cd01894">
    <property type="entry name" value="EngA1"/>
    <property type="match status" value="1"/>
</dbReference>
<dbReference type="CDD" id="cd01895">
    <property type="entry name" value="EngA2"/>
    <property type="match status" value="1"/>
</dbReference>
<dbReference type="FunFam" id="3.30.300.20:FF:000004">
    <property type="entry name" value="GTPase Der"/>
    <property type="match status" value="1"/>
</dbReference>
<dbReference type="FunFam" id="3.40.50.300:FF:000040">
    <property type="entry name" value="GTPase Der"/>
    <property type="match status" value="1"/>
</dbReference>
<dbReference type="FunFam" id="3.40.50.300:FF:001185">
    <property type="entry name" value="GTPase Der"/>
    <property type="match status" value="1"/>
</dbReference>
<dbReference type="Gene3D" id="3.30.300.20">
    <property type="match status" value="1"/>
</dbReference>
<dbReference type="Gene3D" id="3.40.50.300">
    <property type="entry name" value="P-loop containing nucleotide triphosphate hydrolases"/>
    <property type="match status" value="2"/>
</dbReference>
<dbReference type="HAMAP" id="MF_00195">
    <property type="entry name" value="GTPase_Der"/>
    <property type="match status" value="1"/>
</dbReference>
<dbReference type="InterPro" id="IPR003593">
    <property type="entry name" value="AAA+_ATPase"/>
</dbReference>
<dbReference type="InterPro" id="IPR031166">
    <property type="entry name" value="G_ENGA"/>
</dbReference>
<dbReference type="InterPro" id="IPR006073">
    <property type="entry name" value="GTP-bd"/>
</dbReference>
<dbReference type="InterPro" id="IPR016484">
    <property type="entry name" value="GTPase_Der"/>
</dbReference>
<dbReference type="InterPro" id="IPR032859">
    <property type="entry name" value="KH_dom-like"/>
</dbReference>
<dbReference type="InterPro" id="IPR015946">
    <property type="entry name" value="KH_dom-like_a/b"/>
</dbReference>
<dbReference type="InterPro" id="IPR027417">
    <property type="entry name" value="P-loop_NTPase"/>
</dbReference>
<dbReference type="InterPro" id="IPR005225">
    <property type="entry name" value="Small_GTP-bd"/>
</dbReference>
<dbReference type="NCBIfam" id="TIGR03594">
    <property type="entry name" value="GTPase_EngA"/>
    <property type="match status" value="1"/>
</dbReference>
<dbReference type="NCBIfam" id="TIGR00231">
    <property type="entry name" value="small_GTP"/>
    <property type="match status" value="2"/>
</dbReference>
<dbReference type="PANTHER" id="PTHR43834">
    <property type="entry name" value="GTPASE DER"/>
    <property type="match status" value="1"/>
</dbReference>
<dbReference type="PANTHER" id="PTHR43834:SF6">
    <property type="entry name" value="GTPASE DER"/>
    <property type="match status" value="1"/>
</dbReference>
<dbReference type="Pfam" id="PF14714">
    <property type="entry name" value="KH_dom-like"/>
    <property type="match status" value="1"/>
</dbReference>
<dbReference type="Pfam" id="PF01926">
    <property type="entry name" value="MMR_HSR1"/>
    <property type="match status" value="2"/>
</dbReference>
<dbReference type="PIRSF" id="PIRSF006485">
    <property type="entry name" value="GTP-binding_EngA"/>
    <property type="match status" value="1"/>
</dbReference>
<dbReference type="PRINTS" id="PR00326">
    <property type="entry name" value="GTP1OBG"/>
</dbReference>
<dbReference type="SMART" id="SM00382">
    <property type="entry name" value="AAA"/>
    <property type="match status" value="2"/>
</dbReference>
<dbReference type="SUPFAM" id="SSF52540">
    <property type="entry name" value="P-loop containing nucleoside triphosphate hydrolases"/>
    <property type="match status" value="2"/>
</dbReference>
<dbReference type="PROSITE" id="PS51712">
    <property type="entry name" value="G_ENGA"/>
    <property type="match status" value="2"/>
</dbReference>
<sequence>MPLPIVAILGRPNVGKSTLVNRLAGSREAIVHDEPGVTRDRTYQEAFWCDRDFTVVDTGGLVFDDDTEFLPLIREQAELALAEAALAVLVVDGQAGLTAADNEIADWLRHQNRPIVVAVNKCESPDKGAAQAAEFWSLGFGEPLPISSIHGSGTGELLDRVLELLPPADEAAGDETEIGVAIVGRPNVGKSSLLNSFLGEQRAIVSPIAGTTRDAIDTVIERNDQRYRLVDTAGIRRKRGVDYGPEFFGINRSFKAIRRADVCLLVIDVLDGVTDQDQKLAGRIEEDGRACVIVVNKWDAHEKDSSTIYEVERQLRDRLYFLDWAPMIFVSALTGQRVEKILDQVNTVVEQHRRRVGTSVINEVLGDAIAWRTPPTTRQGRQGRIYYGTQVTTQPPSFTLFVNDPKLFGESYRRYIERQFRESLGFSGTPIRLFWRGKKSRELERGANRATRV</sequence>
<proteinExistence type="inferred from homology"/>
<protein>
    <recommendedName>
        <fullName evidence="1">GTPase Der</fullName>
    </recommendedName>
    <alternativeName>
        <fullName evidence="1">GTP-binding protein EngA</fullName>
    </alternativeName>
</protein>
<accession>Q5N167</accession>
<evidence type="ECO:0000255" key="1">
    <source>
        <dbReference type="HAMAP-Rule" id="MF_00195"/>
    </source>
</evidence>
<comment type="function">
    <text evidence="1">GTPase that plays an essential role in the late steps of ribosome biogenesis.</text>
</comment>
<comment type="subunit">
    <text evidence="1">Associates with the 50S ribosomal subunit.</text>
</comment>
<comment type="similarity">
    <text evidence="1">Belongs to the TRAFAC class TrmE-Era-EngA-EngB-Septin-like GTPase superfamily. EngA (Der) GTPase family.</text>
</comment>
<feature type="chain" id="PRO_1000011767" description="GTPase Der">
    <location>
        <begin position="1"/>
        <end position="453"/>
    </location>
</feature>
<feature type="domain" description="EngA-type G 1">
    <location>
        <begin position="4"/>
        <end position="169"/>
    </location>
</feature>
<feature type="domain" description="EngA-type G 2">
    <location>
        <begin position="178"/>
        <end position="353"/>
    </location>
</feature>
<feature type="domain" description="KH-like" evidence="1">
    <location>
        <begin position="354"/>
        <end position="439"/>
    </location>
</feature>
<feature type="binding site" evidence="1">
    <location>
        <begin position="10"/>
        <end position="17"/>
    </location>
    <ligand>
        <name>GTP</name>
        <dbReference type="ChEBI" id="CHEBI:37565"/>
        <label>1</label>
    </ligand>
</feature>
<feature type="binding site" evidence="1">
    <location>
        <begin position="57"/>
        <end position="61"/>
    </location>
    <ligand>
        <name>GTP</name>
        <dbReference type="ChEBI" id="CHEBI:37565"/>
        <label>1</label>
    </ligand>
</feature>
<feature type="binding site" evidence="1">
    <location>
        <begin position="120"/>
        <end position="123"/>
    </location>
    <ligand>
        <name>GTP</name>
        <dbReference type="ChEBI" id="CHEBI:37565"/>
        <label>1</label>
    </ligand>
</feature>
<feature type="binding site" evidence="1">
    <location>
        <begin position="184"/>
        <end position="191"/>
    </location>
    <ligand>
        <name>GTP</name>
        <dbReference type="ChEBI" id="CHEBI:37565"/>
        <label>2</label>
    </ligand>
</feature>
<feature type="binding site" evidence="1">
    <location>
        <begin position="231"/>
        <end position="235"/>
    </location>
    <ligand>
        <name>GTP</name>
        <dbReference type="ChEBI" id="CHEBI:37565"/>
        <label>2</label>
    </ligand>
</feature>
<feature type="binding site" evidence="1">
    <location>
        <begin position="296"/>
        <end position="299"/>
    </location>
    <ligand>
        <name>GTP</name>
        <dbReference type="ChEBI" id="CHEBI:37565"/>
        <label>2</label>
    </ligand>
</feature>
<name>DER_SYNP6</name>
<gene>
    <name evidence="1" type="primary">der</name>
    <name type="synonym">engA</name>
    <name type="ordered locus">syc1763_c</name>
</gene>
<keyword id="KW-0342">GTP-binding</keyword>
<keyword id="KW-0547">Nucleotide-binding</keyword>
<keyword id="KW-0677">Repeat</keyword>
<keyword id="KW-0690">Ribosome biogenesis</keyword>
<reference key="1">
    <citation type="journal article" date="2007" name="Photosyn. Res.">
        <title>Complete nucleotide sequence of the freshwater unicellular cyanobacterium Synechococcus elongatus PCC 6301 chromosome: gene content and organization.</title>
        <authorList>
            <person name="Sugita C."/>
            <person name="Ogata K."/>
            <person name="Shikata M."/>
            <person name="Jikuya H."/>
            <person name="Takano J."/>
            <person name="Furumichi M."/>
            <person name="Kanehisa M."/>
            <person name="Omata T."/>
            <person name="Sugiura M."/>
            <person name="Sugita M."/>
        </authorList>
    </citation>
    <scope>NUCLEOTIDE SEQUENCE [LARGE SCALE GENOMIC DNA]</scope>
    <source>
        <strain>ATCC 27144 / PCC 6301 / SAUG 1402/1</strain>
    </source>
</reference>
<organism>
    <name type="scientific">Synechococcus sp. (strain ATCC 27144 / PCC 6301 / SAUG 1402/1)</name>
    <name type="common">Anacystis nidulans</name>
    <dbReference type="NCBI Taxonomy" id="269084"/>
    <lineage>
        <taxon>Bacteria</taxon>
        <taxon>Bacillati</taxon>
        <taxon>Cyanobacteriota</taxon>
        <taxon>Cyanophyceae</taxon>
        <taxon>Synechococcales</taxon>
        <taxon>Synechococcaceae</taxon>
        <taxon>Synechococcus</taxon>
    </lineage>
</organism>